<dbReference type="EMBL" id="AY014938">
    <property type="protein sequence ID" value="AAG40497.1"/>
    <property type="molecule type" value="Genomic_DNA"/>
</dbReference>
<dbReference type="EMBL" id="AY014939">
    <property type="protein sequence ID" value="AAG40498.1"/>
    <property type="molecule type" value="Genomic_DNA"/>
</dbReference>
<dbReference type="EMBL" id="AY014940">
    <property type="protein sequence ID" value="AAG40499.1"/>
    <property type="molecule type" value="Genomic_DNA"/>
</dbReference>
<dbReference type="EMBL" id="AJ000458">
    <property type="protein sequence ID" value="CAA04101.1"/>
    <property type="molecule type" value="Genomic_DNA"/>
</dbReference>
<dbReference type="SMR" id="O79452"/>
<dbReference type="GO" id="GO:0005743">
    <property type="term" value="C:mitochondrial inner membrane"/>
    <property type="evidence" value="ECO:0007669"/>
    <property type="project" value="UniProtKB-SubCell"/>
</dbReference>
<dbReference type="GO" id="GO:0045275">
    <property type="term" value="C:respiratory chain complex III"/>
    <property type="evidence" value="ECO:0007669"/>
    <property type="project" value="InterPro"/>
</dbReference>
<dbReference type="GO" id="GO:0046872">
    <property type="term" value="F:metal ion binding"/>
    <property type="evidence" value="ECO:0007669"/>
    <property type="project" value="UniProtKB-KW"/>
</dbReference>
<dbReference type="GO" id="GO:0008121">
    <property type="term" value="F:ubiquinol-cytochrome-c reductase activity"/>
    <property type="evidence" value="ECO:0007669"/>
    <property type="project" value="InterPro"/>
</dbReference>
<dbReference type="GO" id="GO:0006122">
    <property type="term" value="P:mitochondrial electron transport, ubiquinol to cytochrome c"/>
    <property type="evidence" value="ECO:0007669"/>
    <property type="project" value="TreeGrafter"/>
</dbReference>
<dbReference type="CDD" id="cd00290">
    <property type="entry name" value="cytochrome_b_C"/>
    <property type="match status" value="1"/>
</dbReference>
<dbReference type="CDD" id="cd00284">
    <property type="entry name" value="Cytochrome_b_N"/>
    <property type="match status" value="1"/>
</dbReference>
<dbReference type="FunFam" id="1.20.810.10:FF:000002">
    <property type="entry name" value="Cytochrome b"/>
    <property type="match status" value="1"/>
</dbReference>
<dbReference type="Gene3D" id="1.20.810.10">
    <property type="entry name" value="Cytochrome Bc1 Complex, Chain C"/>
    <property type="match status" value="1"/>
</dbReference>
<dbReference type="InterPro" id="IPR005798">
    <property type="entry name" value="Cyt_b/b6_C"/>
</dbReference>
<dbReference type="InterPro" id="IPR036150">
    <property type="entry name" value="Cyt_b/b6_C_sf"/>
</dbReference>
<dbReference type="InterPro" id="IPR005797">
    <property type="entry name" value="Cyt_b/b6_N"/>
</dbReference>
<dbReference type="InterPro" id="IPR027387">
    <property type="entry name" value="Cytb/b6-like_sf"/>
</dbReference>
<dbReference type="InterPro" id="IPR030689">
    <property type="entry name" value="Cytochrome_b"/>
</dbReference>
<dbReference type="InterPro" id="IPR048260">
    <property type="entry name" value="Cytochrome_b_C_euk/bac"/>
</dbReference>
<dbReference type="InterPro" id="IPR048259">
    <property type="entry name" value="Cytochrome_b_N_euk/bac"/>
</dbReference>
<dbReference type="InterPro" id="IPR016174">
    <property type="entry name" value="Di-haem_cyt_TM"/>
</dbReference>
<dbReference type="PANTHER" id="PTHR19271">
    <property type="entry name" value="CYTOCHROME B"/>
    <property type="match status" value="1"/>
</dbReference>
<dbReference type="PANTHER" id="PTHR19271:SF16">
    <property type="entry name" value="CYTOCHROME B"/>
    <property type="match status" value="1"/>
</dbReference>
<dbReference type="Pfam" id="PF00032">
    <property type="entry name" value="Cytochrom_B_C"/>
    <property type="match status" value="1"/>
</dbReference>
<dbReference type="Pfam" id="PF00033">
    <property type="entry name" value="Cytochrome_B"/>
    <property type="match status" value="1"/>
</dbReference>
<dbReference type="PIRSF" id="PIRSF038885">
    <property type="entry name" value="COB"/>
    <property type="match status" value="1"/>
</dbReference>
<dbReference type="SUPFAM" id="SSF81648">
    <property type="entry name" value="a domain/subunit of cytochrome bc1 complex (Ubiquinol-cytochrome c reductase)"/>
    <property type="match status" value="1"/>
</dbReference>
<dbReference type="SUPFAM" id="SSF81342">
    <property type="entry name" value="Transmembrane di-heme cytochromes"/>
    <property type="match status" value="1"/>
</dbReference>
<dbReference type="PROSITE" id="PS51003">
    <property type="entry name" value="CYTB_CTER"/>
    <property type="match status" value="1"/>
</dbReference>
<dbReference type="PROSITE" id="PS51002">
    <property type="entry name" value="CYTB_NTER"/>
    <property type="match status" value="1"/>
</dbReference>
<proteinExistence type="inferred from homology"/>
<accession>O79452</accession>
<accession>Q7HFF1</accession>
<organism>
    <name type="scientific">Sorex haydeni</name>
    <name type="common">Hayden's shrew</name>
    <name type="synonym">Prairie shrew</name>
    <dbReference type="NCBI Taxonomy" id="9383"/>
    <lineage>
        <taxon>Eukaryota</taxon>
        <taxon>Metazoa</taxon>
        <taxon>Chordata</taxon>
        <taxon>Craniata</taxon>
        <taxon>Vertebrata</taxon>
        <taxon>Euteleostomi</taxon>
        <taxon>Mammalia</taxon>
        <taxon>Eutheria</taxon>
        <taxon>Laurasiatheria</taxon>
        <taxon>Eulipotyphla</taxon>
        <taxon>Soricidae</taxon>
        <taxon>Soricinae</taxon>
        <taxon>Sorex</taxon>
    </lineage>
</organism>
<sequence>MTNLRKTHPLMKIINSSFIDLPAPSNISSWWNFGSLLGVCLIVQILTGLFLAMHYTSDTMTAFSSVTHICRDVNYGWLIRYLHANGASMFFICLFLHVGRGLYYGSYMFLETWNIGVLLLFAVMATAFMGYVLPWGQMSFWGATVITNLLSAIPYIGSDLVEWIWGGFSVDKATLTRFFAFHFILPFIIAALAGVHLLFLHETGSNNPSGLCSDADKIPFHPYYTIKDILGVLLLILVLTSLVLFSPDLLGDPDNYTPANPLNTPPHIKPEWYFLFAYAILRSIPNKLGGVLALVLSILVLAVVPFLHTSKQRSMMFRPFSQCLFWILVADLLTLTWIGGQPVEHPFIIIGQLASILYFLLILVLMPITSLFENNLLKW</sequence>
<reference key="1">
    <citation type="journal article" date="2003" name="J. Mammal.">
        <title>Phylogenetic diversification within the Sorex cinereus group (Soricidae).</title>
        <authorList>
            <person name="Demboski J.R."/>
            <person name="Cook J.A."/>
        </authorList>
    </citation>
    <scope>NUCLEOTIDE SEQUENCE [GENOMIC DNA]</scope>
    <source>
        <strain>Isolate AFTC 23162</strain>
        <strain>Isolate AFTC 23163</strain>
        <strain>Isolate NK 7942</strain>
    </source>
</reference>
<reference key="2">
    <citation type="journal article" date="1999" name="Mol. Phylogenet. Evol.">
        <title>Molecular phylogeny and evolution of Sorex shrews (Soricidae: Insectivora) inferred from mitochondrial DNA sequence data.</title>
        <authorList>
            <person name="Fumagalli L."/>
            <person name="Taberlet P."/>
            <person name="Stewart D.T."/>
            <person name="Gielly L."/>
            <person name="Hausser J."/>
            <person name="Vogel P."/>
        </authorList>
    </citation>
    <scope>NUCLEOTIDE SEQUENCE [GENOMIC DNA] OF 44-379</scope>
</reference>
<name>CYB_SORHA</name>
<protein>
    <recommendedName>
        <fullName>Cytochrome b</fullName>
    </recommendedName>
    <alternativeName>
        <fullName>Complex III subunit 3</fullName>
    </alternativeName>
    <alternativeName>
        <fullName>Complex III subunit III</fullName>
    </alternativeName>
    <alternativeName>
        <fullName>Cytochrome b-c1 complex subunit 3</fullName>
    </alternativeName>
    <alternativeName>
        <fullName>Ubiquinol-cytochrome-c reductase complex cytochrome b subunit</fullName>
    </alternativeName>
</protein>
<comment type="function">
    <text evidence="2">Component of the ubiquinol-cytochrome c reductase complex (complex III or cytochrome b-c1 complex) that is part of the mitochondrial respiratory chain. The b-c1 complex mediates electron transfer from ubiquinol to cytochrome c. Contributes to the generation of a proton gradient across the mitochondrial membrane that is then used for ATP synthesis.</text>
</comment>
<comment type="cofactor">
    <cofactor evidence="2">
        <name>heme b</name>
        <dbReference type="ChEBI" id="CHEBI:60344"/>
    </cofactor>
    <text evidence="2">Binds 2 heme b groups non-covalently.</text>
</comment>
<comment type="subunit">
    <text evidence="2">The cytochrome bc1 complex contains 11 subunits: 3 respiratory subunits (MT-CYB, CYC1 and UQCRFS1), 2 core proteins (UQCRC1 and UQCRC2) and 6 low-molecular weight proteins (UQCRH/QCR6, UQCRB/QCR7, UQCRQ/QCR8, UQCR10/QCR9, UQCR11/QCR10 and a cleavage product of UQCRFS1). This cytochrome bc1 complex then forms a dimer.</text>
</comment>
<comment type="subcellular location">
    <subcellularLocation>
        <location evidence="2">Mitochondrion inner membrane</location>
        <topology evidence="2">Multi-pass membrane protein</topology>
    </subcellularLocation>
</comment>
<comment type="miscellaneous">
    <text evidence="1">Heme 1 (or BL or b562) is low-potential and absorbs at about 562 nm, and heme 2 (or BH or b566) is high-potential and absorbs at about 566 nm.</text>
</comment>
<comment type="similarity">
    <text evidence="3 4">Belongs to the cytochrome b family.</text>
</comment>
<comment type="caution">
    <text evidence="2">The full-length protein contains only eight transmembrane helices, not nine as predicted by bioinformatics tools.</text>
</comment>
<gene>
    <name type="primary">MT-CYB</name>
    <name type="synonym">COB</name>
    <name type="synonym">CYTB</name>
    <name type="synonym">MTCYB</name>
</gene>
<evidence type="ECO:0000250" key="1"/>
<evidence type="ECO:0000250" key="2">
    <source>
        <dbReference type="UniProtKB" id="P00157"/>
    </source>
</evidence>
<evidence type="ECO:0000255" key="3">
    <source>
        <dbReference type="PROSITE-ProRule" id="PRU00967"/>
    </source>
</evidence>
<evidence type="ECO:0000255" key="4">
    <source>
        <dbReference type="PROSITE-ProRule" id="PRU00968"/>
    </source>
</evidence>
<evidence type="ECO:0000305" key="5"/>
<geneLocation type="mitochondrion"/>
<feature type="chain" id="PRO_0000061562" description="Cytochrome b">
    <location>
        <begin position="1"/>
        <end position="379"/>
    </location>
</feature>
<feature type="transmembrane region" description="Helical" evidence="2">
    <location>
        <begin position="33"/>
        <end position="53"/>
    </location>
</feature>
<feature type="transmembrane region" description="Helical" evidence="2">
    <location>
        <begin position="77"/>
        <end position="98"/>
    </location>
</feature>
<feature type="transmembrane region" description="Helical" evidence="2">
    <location>
        <begin position="113"/>
        <end position="133"/>
    </location>
</feature>
<feature type="transmembrane region" description="Helical" evidence="2">
    <location>
        <begin position="178"/>
        <end position="198"/>
    </location>
</feature>
<feature type="transmembrane region" description="Helical" evidence="2">
    <location>
        <begin position="226"/>
        <end position="246"/>
    </location>
</feature>
<feature type="transmembrane region" description="Helical" evidence="2">
    <location>
        <begin position="288"/>
        <end position="308"/>
    </location>
</feature>
<feature type="transmembrane region" description="Helical" evidence="2">
    <location>
        <begin position="320"/>
        <end position="340"/>
    </location>
</feature>
<feature type="transmembrane region" description="Helical" evidence="2">
    <location>
        <begin position="347"/>
        <end position="367"/>
    </location>
</feature>
<feature type="binding site" description="axial binding residue" evidence="2">
    <location>
        <position position="83"/>
    </location>
    <ligand>
        <name>heme b</name>
        <dbReference type="ChEBI" id="CHEBI:60344"/>
        <label>b562</label>
    </ligand>
    <ligandPart>
        <name>Fe</name>
        <dbReference type="ChEBI" id="CHEBI:18248"/>
    </ligandPart>
</feature>
<feature type="binding site" description="axial binding residue" evidence="2">
    <location>
        <position position="97"/>
    </location>
    <ligand>
        <name>heme b</name>
        <dbReference type="ChEBI" id="CHEBI:60344"/>
        <label>b566</label>
    </ligand>
    <ligandPart>
        <name>Fe</name>
        <dbReference type="ChEBI" id="CHEBI:18248"/>
    </ligandPart>
</feature>
<feature type="binding site" description="axial binding residue" evidence="2">
    <location>
        <position position="182"/>
    </location>
    <ligand>
        <name>heme b</name>
        <dbReference type="ChEBI" id="CHEBI:60344"/>
        <label>b562</label>
    </ligand>
    <ligandPart>
        <name>Fe</name>
        <dbReference type="ChEBI" id="CHEBI:18248"/>
    </ligandPart>
</feature>
<feature type="binding site" description="axial binding residue" evidence="2">
    <location>
        <position position="196"/>
    </location>
    <ligand>
        <name>heme b</name>
        <dbReference type="ChEBI" id="CHEBI:60344"/>
        <label>b566</label>
    </ligand>
    <ligandPart>
        <name>Fe</name>
        <dbReference type="ChEBI" id="CHEBI:18248"/>
    </ligandPart>
</feature>
<feature type="binding site" evidence="2">
    <location>
        <position position="201"/>
    </location>
    <ligand>
        <name>a ubiquinone</name>
        <dbReference type="ChEBI" id="CHEBI:16389"/>
    </ligand>
</feature>
<feature type="sequence conflict" description="In Ref. 2; CAA04101." evidence="5" ref="2">
    <original>A</original>
    <variation>D</variation>
    <location>
        <position position="180"/>
    </location>
</feature>
<keyword id="KW-0249">Electron transport</keyword>
<keyword id="KW-0349">Heme</keyword>
<keyword id="KW-0408">Iron</keyword>
<keyword id="KW-0472">Membrane</keyword>
<keyword id="KW-0479">Metal-binding</keyword>
<keyword id="KW-0496">Mitochondrion</keyword>
<keyword id="KW-0999">Mitochondrion inner membrane</keyword>
<keyword id="KW-0679">Respiratory chain</keyword>
<keyword id="KW-0812">Transmembrane</keyword>
<keyword id="KW-1133">Transmembrane helix</keyword>
<keyword id="KW-0813">Transport</keyword>
<keyword id="KW-0830">Ubiquinone</keyword>